<comment type="function">
    <text evidence="3">Enantio-specific polyphenol oxidase involved in aromatic ring hydroxylation. Involved in the biosynthesis of the creosote bush 8-8' linked lignans. Has a strong preference for the 3' position of (+)-larreatricin.</text>
</comment>
<comment type="catalytic activity">
    <reaction evidence="3">
        <text>(+)-larreatricin + AH2 + O2 = (+)-3'-hydroxylarreatricin + A + H2O</text>
        <dbReference type="Rhea" id="RHEA:34259"/>
        <dbReference type="ChEBI" id="CHEBI:13193"/>
        <dbReference type="ChEBI" id="CHEBI:15377"/>
        <dbReference type="ChEBI" id="CHEBI:15379"/>
        <dbReference type="ChEBI" id="CHEBI:17499"/>
        <dbReference type="ChEBI" id="CHEBI:67153"/>
        <dbReference type="ChEBI" id="CHEBI:67154"/>
        <dbReference type="EC" id="1.14.99.47"/>
    </reaction>
</comment>
<comment type="cofactor">
    <cofactor evidence="1">
        <name>Cu(2+)</name>
        <dbReference type="ChEBI" id="CHEBI:29036"/>
    </cofactor>
    <text evidence="1">Binds 2 copper ions per subunit.</text>
</comment>
<comment type="subcellular location">
    <subcellularLocation>
        <location evidence="5">Plastid</location>
        <location evidence="5">Chloroplast thylakoid lumen</location>
    </subcellularLocation>
</comment>
<comment type="similarity">
    <text evidence="4">Belongs to the tyrosinase family.</text>
</comment>
<name>LAHY_LARTR</name>
<dbReference type="EC" id="1.14.99.47"/>
<dbReference type="EMBL" id="AY370019">
    <property type="protein sequence ID" value="AAQ67412.1"/>
    <property type="molecule type" value="mRNA"/>
</dbReference>
<dbReference type="SMR" id="Q6UIL3"/>
<dbReference type="BRENDA" id="1.14.18.1">
    <property type="organism ID" value="8039"/>
</dbReference>
<dbReference type="BRENDA" id="1.14.99.47">
    <property type="organism ID" value="8039"/>
</dbReference>
<dbReference type="GO" id="GO:0009543">
    <property type="term" value="C:chloroplast thylakoid lumen"/>
    <property type="evidence" value="ECO:0007669"/>
    <property type="project" value="UniProtKB-SubCell"/>
</dbReference>
<dbReference type="GO" id="GO:0004097">
    <property type="term" value="F:catechol oxidase activity"/>
    <property type="evidence" value="ECO:0007669"/>
    <property type="project" value="InterPro"/>
</dbReference>
<dbReference type="GO" id="GO:0046872">
    <property type="term" value="F:metal ion binding"/>
    <property type="evidence" value="ECO:0007669"/>
    <property type="project" value="UniProtKB-KW"/>
</dbReference>
<dbReference type="GO" id="GO:1901708">
    <property type="term" value="P:(+)-3'-hydroxylarreatricin biosynthetic process"/>
    <property type="evidence" value="ECO:0000314"/>
    <property type="project" value="UniProtKB"/>
</dbReference>
<dbReference type="GO" id="GO:1901709">
    <property type="term" value="P:(+)-larreatricin metabolic process"/>
    <property type="evidence" value="ECO:0000314"/>
    <property type="project" value="UniProtKB"/>
</dbReference>
<dbReference type="GO" id="GO:0046148">
    <property type="term" value="P:pigment biosynthetic process"/>
    <property type="evidence" value="ECO:0007669"/>
    <property type="project" value="InterPro"/>
</dbReference>
<dbReference type="FunFam" id="1.10.1280.10:FF:000007">
    <property type="entry name" value="Polyphenol oxidase, chloroplastic"/>
    <property type="match status" value="1"/>
</dbReference>
<dbReference type="Gene3D" id="1.10.1280.10">
    <property type="entry name" value="Di-copper center containing domain from catechol oxidase"/>
    <property type="match status" value="1"/>
</dbReference>
<dbReference type="InterPro" id="IPR008922">
    <property type="entry name" value="Di-copper_centre_dom_sf"/>
</dbReference>
<dbReference type="InterPro" id="IPR016213">
    <property type="entry name" value="Polyphenol_oxidase"/>
</dbReference>
<dbReference type="InterPro" id="IPR022740">
    <property type="entry name" value="Polyphenol_oxidase_C"/>
</dbReference>
<dbReference type="InterPro" id="IPR022739">
    <property type="entry name" value="Polyphenol_oxidase_cen"/>
</dbReference>
<dbReference type="InterPro" id="IPR050316">
    <property type="entry name" value="Tyrosinase/Hemocyanin"/>
</dbReference>
<dbReference type="InterPro" id="IPR002227">
    <property type="entry name" value="Tyrosinase_Cu-bd"/>
</dbReference>
<dbReference type="PANTHER" id="PTHR11474:SF76">
    <property type="entry name" value="SHKT DOMAIN-CONTAINING PROTEIN"/>
    <property type="match status" value="1"/>
</dbReference>
<dbReference type="PANTHER" id="PTHR11474">
    <property type="entry name" value="TYROSINASE FAMILY MEMBER"/>
    <property type="match status" value="1"/>
</dbReference>
<dbReference type="Pfam" id="PF12142">
    <property type="entry name" value="PPO1_DWL"/>
    <property type="match status" value="1"/>
</dbReference>
<dbReference type="Pfam" id="PF12143">
    <property type="entry name" value="PPO1_KFDV"/>
    <property type="match status" value="1"/>
</dbReference>
<dbReference type="Pfam" id="PF00264">
    <property type="entry name" value="Tyrosinase"/>
    <property type="match status" value="1"/>
</dbReference>
<dbReference type="PIRSF" id="PIRSF000290">
    <property type="entry name" value="PPO_plant"/>
    <property type="match status" value="1"/>
</dbReference>
<dbReference type="PRINTS" id="PR00092">
    <property type="entry name" value="TYROSINASE"/>
</dbReference>
<dbReference type="SUPFAM" id="SSF48056">
    <property type="entry name" value="Di-copper centre-containing domain"/>
    <property type="match status" value="1"/>
</dbReference>
<dbReference type="PROSITE" id="PS00497">
    <property type="entry name" value="TYROSINASE_1"/>
    <property type="match status" value="1"/>
</dbReference>
<dbReference type="PROSITE" id="PS00498">
    <property type="entry name" value="TYROSINASE_2"/>
    <property type="match status" value="1"/>
</dbReference>
<accession>Q6UIL3</accession>
<organism>
    <name type="scientific">Larrea tridentata</name>
    <name type="common">Creosote bush</name>
    <name type="synonym">Zygophyllum tridentatum</name>
    <dbReference type="NCBI Taxonomy" id="66636"/>
    <lineage>
        <taxon>Eukaryota</taxon>
        <taxon>Viridiplantae</taxon>
        <taxon>Streptophyta</taxon>
        <taxon>Embryophyta</taxon>
        <taxon>Tracheophyta</taxon>
        <taxon>Spermatophyta</taxon>
        <taxon>Magnoliopsida</taxon>
        <taxon>eudicotyledons</taxon>
        <taxon>Gunneridae</taxon>
        <taxon>Pentapetalae</taxon>
        <taxon>rosids</taxon>
        <taxon>fabids</taxon>
        <taxon>Zygophyllales</taxon>
        <taxon>Zygophyllaceae</taxon>
        <taxon>Larreoideae</taxon>
        <taxon>Larrea</taxon>
    </lineage>
</organism>
<protein>
    <recommendedName>
        <fullName>(+)-larreatricin hydroxylase, chloroplastic</fullName>
        <ecNumber>1.14.99.47</ecNumber>
    </recommendedName>
    <alternativeName>
        <fullName>Polyphenol oxidase</fullName>
    </alternativeName>
</protein>
<keyword id="KW-0150">Chloroplast</keyword>
<keyword id="KW-0186">Copper</keyword>
<keyword id="KW-1015">Disulfide bond</keyword>
<keyword id="KW-0479">Metal-binding</keyword>
<keyword id="KW-0560">Oxidoreductase</keyword>
<keyword id="KW-0934">Plastid</keyword>
<keyword id="KW-0883">Thioether bond</keyword>
<keyword id="KW-0793">Thylakoid</keyword>
<keyword id="KW-0809">Transit peptide</keyword>
<proteinExistence type="evidence at protein level"/>
<feature type="transit peptide" description="Chloroplast" evidence="2">
    <location>
        <begin position="1"/>
        <end position="32"/>
    </location>
</feature>
<feature type="transit peptide" description="Thylakoid" evidence="2">
    <location>
        <begin position="33"/>
        <end position="79"/>
    </location>
</feature>
<feature type="chain" id="PRO_0000421296" description="(+)-larreatricin hydroxylase, chloroplastic">
    <location>
        <begin position="80"/>
        <end position="584"/>
    </location>
</feature>
<feature type="propeptide" id="PRO_0000421297" description="Removed in mature form" evidence="2">
    <location>
        <begin position="432"/>
        <end position="584"/>
    </location>
</feature>
<feature type="binding site" evidence="1">
    <location>
        <position position="167"/>
    </location>
    <ligand>
        <name>Cu cation</name>
        <dbReference type="ChEBI" id="CHEBI:23378"/>
        <label>A</label>
    </ligand>
</feature>
<feature type="binding site" evidence="1">
    <location>
        <position position="188"/>
    </location>
    <ligand>
        <name>Cu cation</name>
        <dbReference type="ChEBI" id="CHEBI:23378"/>
        <label>A</label>
    </ligand>
</feature>
<feature type="binding site" evidence="1">
    <location>
        <position position="197"/>
    </location>
    <ligand>
        <name>Cu cation</name>
        <dbReference type="ChEBI" id="CHEBI:23378"/>
        <label>A</label>
    </ligand>
</feature>
<feature type="binding site" evidence="1">
    <location>
        <position position="319"/>
    </location>
    <ligand>
        <name>Cu cation</name>
        <dbReference type="ChEBI" id="CHEBI:23378"/>
        <label>B</label>
    </ligand>
</feature>
<feature type="binding site" evidence="1">
    <location>
        <position position="323"/>
    </location>
    <ligand>
        <name>Cu cation</name>
        <dbReference type="ChEBI" id="CHEBI:23378"/>
        <label>B</label>
    </ligand>
</feature>
<feature type="binding site" evidence="1">
    <location>
        <position position="353"/>
    </location>
    <ligand>
        <name>Cu cation</name>
        <dbReference type="ChEBI" id="CHEBI:23378"/>
        <label>B</label>
    </ligand>
</feature>
<feature type="disulfide bond" evidence="1">
    <location>
        <begin position="91"/>
        <end position="106"/>
    </location>
</feature>
<feature type="disulfide bond" evidence="1">
    <location>
        <begin position="105"/>
        <end position="168"/>
    </location>
</feature>
<feature type="cross-link" description="2'-(S-cysteinyl)-histidine (Cys-His)" evidence="1">
    <location>
        <begin position="171"/>
        <end position="188"/>
    </location>
</feature>
<evidence type="ECO:0000250" key="1">
    <source>
        <dbReference type="UniProtKB" id="Q9ZP19"/>
    </source>
</evidence>
<evidence type="ECO:0000255" key="2"/>
<evidence type="ECO:0000269" key="3">
    <source>
    </source>
</evidence>
<evidence type="ECO:0000305" key="4"/>
<evidence type="ECO:0000305" key="5">
    <source>
    </source>
</evidence>
<reference key="1">
    <citation type="journal article" date="2003" name="Proc. Natl. Acad. Sci. U.S.A.">
        <title>(+)-Larreatricin hydroxylase, an enantio-specific polyphenol oxidase from the creosote bush (Larrea tridentata).</title>
        <authorList>
            <person name="Cho M.H."/>
            <person name="Moinuddin S.G."/>
            <person name="Helms G.L."/>
            <person name="Hishiyama S."/>
            <person name="Eichinger D."/>
            <person name="Davin L.B."/>
            <person name="Lewis N.G."/>
        </authorList>
    </citation>
    <scope>NUCLEOTIDE SEQUENCE [MRNA]</scope>
    <scope>FUNCTION</scope>
    <scope>CATALYTIC ACTIVITY</scope>
    <scope>SUBCELLULAR LOCATION</scope>
    <scope>IDENTIFICATION BY MASS SPECTROMETRY</scope>
    <scope>PROCESSING</scope>
</reference>
<sequence>MASLSSQSKLLATPYSFPYHTKPSRVSLRRVSCKASNDNKDKPNDQEKTFSIDRRNMLIGLGGLYGASNVFPSNQSTLAAPIQPPVLPDSCHPPEDLAEGVNVLCCPPDVKDPIDFQMPSNPSRLRIRPAAHLADPTYIEKYKKALAAMKALPQNDPRSFYQQANIHCAYCNGAYDQVGFPDVNIQVHHSWLFLPFHRWYLYFYERILGSLIDDPTFAIPFWNWDAPKGMHMPHMFIDPNSPLYDAKRNPAHFPDTIVDLDFSSGEAPSHNPRQIGNNLSIMYKQVVRAKKARLFHGRPLQAGSFPDESGDGSLEGTPHGNIHLWSGDPRQSNFENMGNFYSAGRDPLFYAHHANVDRMWYIWKNSLGRKDYKKKDWLNAGFLLFDENAQPVRVYVRDALDERKLGYAYQEVDIPWINSKPKPRKANPWPNRLRSKATTTTKLINKFPLTLDSTVSFEVKRPKKSRSKSEKEDEEEVLVIEKIKHEPQFPLKFDVYINDEDEDPSAADQTEFAGSFVNVPHFHRHGDKKDKRQTTNLSIGISEVLDELDVDGDDSIVVTLVPRVGSGQITIGGAKIEFVRDEED</sequence>